<evidence type="ECO:0000255" key="1">
    <source>
        <dbReference type="HAMAP-Rule" id="MF_01866"/>
    </source>
</evidence>
<gene>
    <name type="ordered locus">YPDSF_1042</name>
</gene>
<reference key="1">
    <citation type="submission" date="2007-02" db="EMBL/GenBank/DDBJ databases">
        <title>Complete sequence of chromosome of Yersinia pestis Pestoides F.</title>
        <authorList>
            <consortium name="US DOE Joint Genome Institute"/>
            <person name="Copeland A."/>
            <person name="Lucas S."/>
            <person name="Lapidus A."/>
            <person name="Barry K."/>
            <person name="Detter J.C."/>
            <person name="Glavina del Rio T."/>
            <person name="Hammon N."/>
            <person name="Israni S."/>
            <person name="Dalin E."/>
            <person name="Tice H."/>
            <person name="Pitluck S."/>
            <person name="Di Bartolo G."/>
            <person name="Chain P."/>
            <person name="Malfatti S."/>
            <person name="Shin M."/>
            <person name="Vergez L."/>
            <person name="Schmutz J."/>
            <person name="Larimer F."/>
            <person name="Land M."/>
            <person name="Hauser L."/>
            <person name="Worsham P."/>
            <person name="Chu M."/>
            <person name="Bearden S."/>
            <person name="Garcia E."/>
            <person name="Richardson P."/>
        </authorList>
    </citation>
    <scope>NUCLEOTIDE SEQUENCE [LARGE SCALE GENOMIC DNA]</scope>
    <source>
        <strain>Pestoides F</strain>
    </source>
</reference>
<protein>
    <recommendedName>
        <fullName evidence="1">YcgL domain-containing protein YPDSF_1042</fullName>
    </recommendedName>
</protein>
<accession>A4TJI0</accession>
<proteinExistence type="inferred from homology"/>
<feature type="chain" id="PRO_0000375412" description="YcgL domain-containing protein YPDSF_1042">
    <location>
        <begin position="1"/>
        <end position="90"/>
    </location>
</feature>
<feature type="domain" description="YcgL" evidence="1">
    <location>
        <begin position="1"/>
        <end position="85"/>
    </location>
</feature>
<organism>
    <name type="scientific">Yersinia pestis (strain Pestoides F)</name>
    <dbReference type="NCBI Taxonomy" id="386656"/>
    <lineage>
        <taxon>Bacteria</taxon>
        <taxon>Pseudomonadati</taxon>
        <taxon>Pseudomonadota</taxon>
        <taxon>Gammaproteobacteria</taxon>
        <taxon>Enterobacterales</taxon>
        <taxon>Yersiniaceae</taxon>
        <taxon>Yersinia</taxon>
    </lineage>
</organism>
<name>Y1042_YERPP</name>
<sequence length="90" mass="10227">MLCAIYRSPKRDQTYLYIEKKDDFSRVPAELLASFGKPQFAMLLALNERKTLATADVEKVKNALIEQGFYLQVPPPPESLLKMHLGETKA</sequence>
<dbReference type="EMBL" id="CP000668">
    <property type="protein sequence ID" value="ABP39442.1"/>
    <property type="molecule type" value="Genomic_DNA"/>
</dbReference>
<dbReference type="RefSeq" id="WP_002211743.1">
    <property type="nucleotide sequence ID" value="NZ_CP009715.1"/>
</dbReference>
<dbReference type="SMR" id="A4TJI0"/>
<dbReference type="KEGG" id="ypp:YPDSF_1042"/>
<dbReference type="PATRIC" id="fig|386656.14.peg.2792"/>
<dbReference type="Gene3D" id="3.10.510.20">
    <property type="entry name" value="YcgL domain"/>
    <property type="match status" value="1"/>
</dbReference>
<dbReference type="HAMAP" id="MF_01866">
    <property type="entry name" value="UPF0745"/>
    <property type="match status" value="1"/>
</dbReference>
<dbReference type="InterPro" id="IPR038068">
    <property type="entry name" value="YcgL-like_sf"/>
</dbReference>
<dbReference type="InterPro" id="IPR027354">
    <property type="entry name" value="YcgL_dom"/>
</dbReference>
<dbReference type="PANTHER" id="PTHR38109">
    <property type="entry name" value="PROTEIN YCGL"/>
    <property type="match status" value="1"/>
</dbReference>
<dbReference type="PANTHER" id="PTHR38109:SF1">
    <property type="entry name" value="PROTEIN YCGL"/>
    <property type="match status" value="1"/>
</dbReference>
<dbReference type="Pfam" id="PF05166">
    <property type="entry name" value="YcgL"/>
    <property type="match status" value="1"/>
</dbReference>
<dbReference type="SUPFAM" id="SSF160191">
    <property type="entry name" value="YcgL-like"/>
    <property type="match status" value="1"/>
</dbReference>
<dbReference type="PROSITE" id="PS51648">
    <property type="entry name" value="YCGL"/>
    <property type="match status" value="1"/>
</dbReference>